<reference key="1">
    <citation type="journal article" date="2006" name="Genome Biol.">
        <title>The genome of Rhizobium leguminosarum has recognizable core and accessory components.</title>
        <authorList>
            <person name="Young J.P.W."/>
            <person name="Crossman L.C."/>
            <person name="Johnston A.W.B."/>
            <person name="Thomson N.R."/>
            <person name="Ghazoui Z.F."/>
            <person name="Hull K.H."/>
            <person name="Wexler M."/>
            <person name="Curson A.R.J."/>
            <person name="Todd J.D."/>
            <person name="Poole P.S."/>
            <person name="Mauchline T.H."/>
            <person name="East A.K."/>
            <person name="Quail M.A."/>
            <person name="Churcher C."/>
            <person name="Arrowsmith C."/>
            <person name="Cherevach I."/>
            <person name="Chillingworth T."/>
            <person name="Clarke K."/>
            <person name="Cronin A."/>
            <person name="Davis P."/>
            <person name="Fraser A."/>
            <person name="Hance Z."/>
            <person name="Hauser H."/>
            <person name="Jagels K."/>
            <person name="Moule S."/>
            <person name="Mungall K."/>
            <person name="Norbertczak H."/>
            <person name="Rabbinowitsch E."/>
            <person name="Sanders M."/>
            <person name="Simmonds M."/>
            <person name="Whitehead S."/>
            <person name="Parkhill J."/>
        </authorList>
    </citation>
    <scope>NUCLEOTIDE SEQUENCE [LARGE SCALE GENOMIC DNA]</scope>
    <source>
        <strain>DSM 114642 / LMG 32736 / 3841</strain>
    </source>
</reference>
<dbReference type="EMBL" id="AM236080">
    <property type="protein sequence ID" value="CAK07278.1"/>
    <property type="molecule type" value="Genomic_DNA"/>
</dbReference>
<dbReference type="RefSeq" id="WP_003547557.1">
    <property type="nucleotide sequence ID" value="NC_008380.1"/>
</dbReference>
<dbReference type="SMR" id="Q1MID2"/>
<dbReference type="EnsemblBacteria" id="CAK07278">
    <property type="protein sequence ID" value="CAK07278"/>
    <property type="gene ID" value="RL1783"/>
</dbReference>
<dbReference type="GeneID" id="84669496"/>
<dbReference type="KEGG" id="rle:RL1783"/>
<dbReference type="eggNOG" id="COG0186">
    <property type="taxonomic scope" value="Bacteria"/>
</dbReference>
<dbReference type="HOGENOM" id="CLU_073626_1_1_5"/>
<dbReference type="Proteomes" id="UP000006575">
    <property type="component" value="Chromosome"/>
</dbReference>
<dbReference type="GO" id="GO:0022627">
    <property type="term" value="C:cytosolic small ribosomal subunit"/>
    <property type="evidence" value="ECO:0007669"/>
    <property type="project" value="TreeGrafter"/>
</dbReference>
<dbReference type="GO" id="GO:0019843">
    <property type="term" value="F:rRNA binding"/>
    <property type="evidence" value="ECO:0007669"/>
    <property type="project" value="UniProtKB-UniRule"/>
</dbReference>
<dbReference type="GO" id="GO:0003735">
    <property type="term" value="F:structural constituent of ribosome"/>
    <property type="evidence" value="ECO:0007669"/>
    <property type="project" value="InterPro"/>
</dbReference>
<dbReference type="GO" id="GO:0006412">
    <property type="term" value="P:translation"/>
    <property type="evidence" value="ECO:0007669"/>
    <property type="project" value="UniProtKB-UniRule"/>
</dbReference>
<dbReference type="CDD" id="cd00364">
    <property type="entry name" value="Ribosomal_uS17"/>
    <property type="match status" value="1"/>
</dbReference>
<dbReference type="Gene3D" id="2.40.50.140">
    <property type="entry name" value="Nucleic acid-binding proteins"/>
    <property type="match status" value="1"/>
</dbReference>
<dbReference type="HAMAP" id="MF_01345_B">
    <property type="entry name" value="Ribosomal_uS17_B"/>
    <property type="match status" value="1"/>
</dbReference>
<dbReference type="InterPro" id="IPR012340">
    <property type="entry name" value="NA-bd_OB-fold"/>
</dbReference>
<dbReference type="InterPro" id="IPR000266">
    <property type="entry name" value="Ribosomal_uS17"/>
</dbReference>
<dbReference type="InterPro" id="IPR019984">
    <property type="entry name" value="Ribosomal_uS17_bact/chlr"/>
</dbReference>
<dbReference type="NCBIfam" id="NF004123">
    <property type="entry name" value="PRK05610.1"/>
    <property type="match status" value="1"/>
</dbReference>
<dbReference type="NCBIfam" id="TIGR03635">
    <property type="entry name" value="uS17_bact"/>
    <property type="match status" value="1"/>
</dbReference>
<dbReference type="PANTHER" id="PTHR10744">
    <property type="entry name" value="40S RIBOSOMAL PROTEIN S11 FAMILY MEMBER"/>
    <property type="match status" value="1"/>
</dbReference>
<dbReference type="PANTHER" id="PTHR10744:SF1">
    <property type="entry name" value="SMALL RIBOSOMAL SUBUNIT PROTEIN US17M"/>
    <property type="match status" value="1"/>
</dbReference>
<dbReference type="Pfam" id="PF00366">
    <property type="entry name" value="Ribosomal_S17"/>
    <property type="match status" value="1"/>
</dbReference>
<dbReference type="PRINTS" id="PR00973">
    <property type="entry name" value="RIBOSOMALS17"/>
</dbReference>
<dbReference type="SUPFAM" id="SSF50249">
    <property type="entry name" value="Nucleic acid-binding proteins"/>
    <property type="match status" value="1"/>
</dbReference>
<protein>
    <recommendedName>
        <fullName evidence="1">Small ribosomal subunit protein uS17</fullName>
    </recommendedName>
    <alternativeName>
        <fullName evidence="2">30S ribosomal protein S17</fullName>
    </alternativeName>
</protein>
<keyword id="KW-0687">Ribonucleoprotein</keyword>
<keyword id="KW-0689">Ribosomal protein</keyword>
<keyword id="KW-0694">RNA-binding</keyword>
<keyword id="KW-0699">rRNA-binding</keyword>
<gene>
    <name evidence="1" type="primary">rpsQ</name>
    <name type="ordered locus">RL1783</name>
</gene>
<sequence>MPKRILQGVVVGDKNEKTVVVRVERRFAHPLLQKTVRRSKKYKAHDENNQYKIGDTVSIEECAPISKDKRWTVISAQGK</sequence>
<feature type="chain" id="PRO_0000255692" description="Small ribosomal subunit protein uS17">
    <location>
        <begin position="1"/>
        <end position="79"/>
    </location>
</feature>
<comment type="function">
    <text evidence="1">One of the primary rRNA binding proteins, it binds specifically to the 5'-end of 16S ribosomal RNA.</text>
</comment>
<comment type="subunit">
    <text evidence="1">Part of the 30S ribosomal subunit.</text>
</comment>
<comment type="similarity">
    <text evidence="1">Belongs to the universal ribosomal protein uS17 family.</text>
</comment>
<accession>Q1MID2</accession>
<proteinExistence type="inferred from homology"/>
<organism>
    <name type="scientific">Rhizobium johnstonii (strain DSM 114642 / LMG 32736 / 3841)</name>
    <name type="common">Rhizobium leguminosarum bv. viciae</name>
    <dbReference type="NCBI Taxonomy" id="216596"/>
    <lineage>
        <taxon>Bacteria</taxon>
        <taxon>Pseudomonadati</taxon>
        <taxon>Pseudomonadota</taxon>
        <taxon>Alphaproteobacteria</taxon>
        <taxon>Hyphomicrobiales</taxon>
        <taxon>Rhizobiaceae</taxon>
        <taxon>Rhizobium/Agrobacterium group</taxon>
        <taxon>Rhizobium</taxon>
        <taxon>Rhizobium johnstonii</taxon>
    </lineage>
</organism>
<name>RS17_RHIJ3</name>
<evidence type="ECO:0000255" key="1">
    <source>
        <dbReference type="HAMAP-Rule" id="MF_01345"/>
    </source>
</evidence>
<evidence type="ECO:0000305" key="2"/>